<keyword id="KW-0997">Cell inner membrane</keyword>
<keyword id="KW-1003">Cell membrane</keyword>
<keyword id="KW-0472">Membrane</keyword>
<keyword id="KW-0812">Transmembrane</keyword>
<keyword id="KW-1133">Transmembrane helix</keyword>
<accession>B5FMZ7</accession>
<comment type="subcellular location">
    <subcellularLocation>
        <location evidence="1">Cell inner membrane</location>
        <topology evidence="1">Multi-pass membrane protein</topology>
    </subcellularLocation>
</comment>
<comment type="similarity">
    <text evidence="1">Belongs to the UPF0299 family.</text>
</comment>
<reference key="1">
    <citation type="journal article" date="2011" name="J. Bacteriol.">
        <title>Comparative genomics of 28 Salmonella enterica isolates: evidence for CRISPR-mediated adaptive sublineage evolution.</title>
        <authorList>
            <person name="Fricke W.F."/>
            <person name="Mammel M.K."/>
            <person name="McDermott P.F."/>
            <person name="Tartera C."/>
            <person name="White D.G."/>
            <person name="Leclerc J.E."/>
            <person name="Ravel J."/>
            <person name="Cebula T.A."/>
        </authorList>
    </citation>
    <scope>NUCLEOTIDE SEQUENCE [LARGE SCALE GENOMIC DNA]</scope>
    <source>
        <strain>CT_02021853</strain>
    </source>
</reference>
<proteinExistence type="inferred from homology"/>
<gene>
    <name evidence="1" type="primary">yohJ</name>
    <name type="ordered locus">SeD_A2528</name>
</gene>
<evidence type="ECO:0000255" key="1">
    <source>
        <dbReference type="HAMAP-Rule" id="MF_01144"/>
    </source>
</evidence>
<protein>
    <recommendedName>
        <fullName evidence="1">UPF0299 membrane protein YohJ</fullName>
    </recommendedName>
</protein>
<organism>
    <name type="scientific">Salmonella dublin (strain CT_02021853)</name>
    <dbReference type="NCBI Taxonomy" id="439851"/>
    <lineage>
        <taxon>Bacteria</taxon>
        <taxon>Pseudomonadati</taxon>
        <taxon>Pseudomonadota</taxon>
        <taxon>Gammaproteobacteria</taxon>
        <taxon>Enterobacterales</taxon>
        <taxon>Enterobacteriaceae</taxon>
        <taxon>Salmonella</taxon>
    </lineage>
</organism>
<name>YOHJ_SALDC</name>
<feature type="chain" id="PRO_1000137368" description="UPF0299 membrane protein YohJ">
    <location>
        <begin position="1"/>
        <end position="132"/>
    </location>
</feature>
<feature type="transmembrane region" description="Helical" evidence="1">
    <location>
        <begin position="7"/>
        <end position="27"/>
    </location>
</feature>
<feature type="transmembrane region" description="Helical" evidence="1">
    <location>
        <begin position="31"/>
        <end position="51"/>
    </location>
</feature>
<feature type="transmembrane region" description="Helical" evidence="1">
    <location>
        <begin position="63"/>
        <end position="83"/>
    </location>
</feature>
<feature type="transmembrane region" description="Helical" evidence="1">
    <location>
        <begin position="93"/>
        <end position="113"/>
    </location>
</feature>
<dbReference type="EMBL" id="CP001144">
    <property type="protein sequence ID" value="ACH75695.1"/>
    <property type="molecule type" value="Genomic_DNA"/>
</dbReference>
<dbReference type="RefSeq" id="WP_000045719.1">
    <property type="nucleotide sequence ID" value="NC_011205.1"/>
</dbReference>
<dbReference type="SMR" id="B5FMZ7"/>
<dbReference type="KEGG" id="sed:SeD_A2528"/>
<dbReference type="HOGENOM" id="CLU_113736_1_1_6"/>
<dbReference type="Proteomes" id="UP000008322">
    <property type="component" value="Chromosome"/>
</dbReference>
<dbReference type="GO" id="GO:0005886">
    <property type="term" value="C:plasma membrane"/>
    <property type="evidence" value="ECO:0007669"/>
    <property type="project" value="UniProtKB-SubCell"/>
</dbReference>
<dbReference type="HAMAP" id="MF_01144">
    <property type="entry name" value="UPF0299"/>
    <property type="match status" value="1"/>
</dbReference>
<dbReference type="InterPro" id="IPR005538">
    <property type="entry name" value="LrgA/CidA"/>
</dbReference>
<dbReference type="InterPro" id="IPR022957">
    <property type="entry name" value="Uncharacterised_UPF0299"/>
</dbReference>
<dbReference type="NCBIfam" id="NF002494">
    <property type="entry name" value="PRK01821.1"/>
    <property type="match status" value="1"/>
</dbReference>
<dbReference type="PANTHER" id="PTHR33931">
    <property type="entry name" value="HOLIN-LIKE PROTEIN CIDA-RELATED"/>
    <property type="match status" value="1"/>
</dbReference>
<dbReference type="PANTHER" id="PTHR33931:SF5">
    <property type="entry name" value="UPF0299 MEMBRANE PROTEIN YOHJ"/>
    <property type="match status" value="1"/>
</dbReference>
<dbReference type="Pfam" id="PF03788">
    <property type="entry name" value="LrgA"/>
    <property type="match status" value="1"/>
</dbReference>
<sequence length="132" mass="14614">MSKSLNIIWQYIRAFVLIYACLYAGIFLASLLPITIPGSIIGMLILFVLLALQILPAKWVNPGCYVLIRYMALLFVPIGVGVMQYFDLLRAQFGPVVVSCAISTLVVFVVVSWSSHLIHGERKVVGQKGTKK</sequence>